<protein>
    <recommendedName>
        <fullName evidence="1">dTTP/UTP pyrophosphatase</fullName>
        <shortName evidence="1">dTTPase/UTPase</shortName>
        <ecNumber evidence="1">3.6.1.9</ecNumber>
    </recommendedName>
    <alternativeName>
        <fullName evidence="1">Nucleoside triphosphate pyrophosphatase</fullName>
    </alternativeName>
    <alternativeName>
        <fullName evidence="1">Nucleotide pyrophosphatase</fullName>
        <shortName evidence="1">Nucleotide PPase</shortName>
    </alternativeName>
</protein>
<proteinExistence type="inferred from homology"/>
<gene>
    <name type="ordered locus">DehaBAV1_0949</name>
</gene>
<organism>
    <name type="scientific">Dehalococcoides mccartyi (strain ATCC BAA-2100 / JCM 16839 / KCTC 5957 / BAV1)</name>
    <dbReference type="NCBI Taxonomy" id="216389"/>
    <lineage>
        <taxon>Bacteria</taxon>
        <taxon>Bacillati</taxon>
        <taxon>Chloroflexota</taxon>
        <taxon>Dehalococcoidia</taxon>
        <taxon>Dehalococcoidales</taxon>
        <taxon>Dehalococcoidaceae</taxon>
        <taxon>Dehalococcoides</taxon>
    </lineage>
</organism>
<sequence>MPDNPTGTLPEIILASASPRRRQILSEMGFIFSVCPSQAELYPDGSVAPAEFAVLNAQIKARDIASKYSNGLIIAADTIVVDDFGILGKPSSKKVALNYLSRLGGKPHTVISSVCLLNTENGQIRSATCQSTLTMRPYTQAEAQRYVDSGLPMDKAGAYGIQDKEFNPVENIQGCYLNVVGLPACTLVRLINEMGFNPKLARNWKPEGDCTLCRIYRTEISRLR</sequence>
<feature type="chain" id="PRO_1000081715" description="dTTP/UTP pyrophosphatase">
    <location>
        <begin position="1"/>
        <end position="224"/>
    </location>
</feature>
<feature type="active site" description="Proton acceptor" evidence="1">
    <location>
        <position position="77"/>
    </location>
</feature>
<feature type="site" description="Important for substrate specificity" evidence="1">
    <location>
        <position position="20"/>
    </location>
</feature>
<feature type="site" description="Important for substrate specificity" evidence="1">
    <location>
        <position position="78"/>
    </location>
</feature>
<feature type="site" description="Important for substrate specificity" evidence="1">
    <location>
        <position position="162"/>
    </location>
</feature>
<comment type="function">
    <text evidence="1">Nucleoside triphosphate pyrophosphatase that hydrolyzes dTTP and UTP. May have a dual role in cell division arrest and in preventing the incorporation of modified nucleotides into cellular nucleic acids.</text>
</comment>
<comment type="catalytic activity">
    <reaction evidence="1">
        <text>dTTP + H2O = dTMP + diphosphate + H(+)</text>
        <dbReference type="Rhea" id="RHEA:28534"/>
        <dbReference type="ChEBI" id="CHEBI:15377"/>
        <dbReference type="ChEBI" id="CHEBI:15378"/>
        <dbReference type="ChEBI" id="CHEBI:33019"/>
        <dbReference type="ChEBI" id="CHEBI:37568"/>
        <dbReference type="ChEBI" id="CHEBI:63528"/>
        <dbReference type="EC" id="3.6.1.9"/>
    </reaction>
</comment>
<comment type="catalytic activity">
    <reaction evidence="1">
        <text>UTP + H2O = UMP + diphosphate + H(+)</text>
        <dbReference type="Rhea" id="RHEA:29395"/>
        <dbReference type="ChEBI" id="CHEBI:15377"/>
        <dbReference type="ChEBI" id="CHEBI:15378"/>
        <dbReference type="ChEBI" id="CHEBI:33019"/>
        <dbReference type="ChEBI" id="CHEBI:46398"/>
        <dbReference type="ChEBI" id="CHEBI:57865"/>
        <dbReference type="EC" id="3.6.1.9"/>
    </reaction>
</comment>
<comment type="cofactor">
    <cofactor evidence="1">
        <name>a divalent metal cation</name>
        <dbReference type="ChEBI" id="CHEBI:60240"/>
    </cofactor>
</comment>
<comment type="subcellular location">
    <subcellularLocation>
        <location evidence="1">Cytoplasm</location>
    </subcellularLocation>
</comment>
<comment type="similarity">
    <text evidence="1">Belongs to the Maf family. YhdE subfamily.</text>
</comment>
<accession>A5FQJ4</accession>
<keyword id="KW-0963">Cytoplasm</keyword>
<keyword id="KW-0378">Hydrolase</keyword>
<keyword id="KW-0546">Nucleotide metabolism</keyword>
<dbReference type="EC" id="3.6.1.9" evidence="1"/>
<dbReference type="EMBL" id="CP000688">
    <property type="protein sequence ID" value="ABQ17529.1"/>
    <property type="molecule type" value="Genomic_DNA"/>
</dbReference>
<dbReference type="SMR" id="A5FQJ4"/>
<dbReference type="KEGG" id="deb:DehaBAV1_0949"/>
<dbReference type="PATRIC" id="fig|216389.18.peg.1003"/>
<dbReference type="HOGENOM" id="CLU_040416_0_0_0"/>
<dbReference type="GO" id="GO:0005737">
    <property type="term" value="C:cytoplasm"/>
    <property type="evidence" value="ECO:0007669"/>
    <property type="project" value="UniProtKB-SubCell"/>
</dbReference>
<dbReference type="GO" id="GO:0036218">
    <property type="term" value="F:dTTP diphosphatase activity"/>
    <property type="evidence" value="ECO:0007669"/>
    <property type="project" value="RHEA"/>
</dbReference>
<dbReference type="GO" id="GO:0036221">
    <property type="term" value="F:UTP diphosphatase activity"/>
    <property type="evidence" value="ECO:0007669"/>
    <property type="project" value="RHEA"/>
</dbReference>
<dbReference type="GO" id="GO:0009117">
    <property type="term" value="P:nucleotide metabolic process"/>
    <property type="evidence" value="ECO:0007669"/>
    <property type="project" value="UniProtKB-KW"/>
</dbReference>
<dbReference type="CDD" id="cd00555">
    <property type="entry name" value="Maf"/>
    <property type="match status" value="1"/>
</dbReference>
<dbReference type="Gene3D" id="3.90.950.10">
    <property type="match status" value="1"/>
</dbReference>
<dbReference type="HAMAP" id="MF_00528">
    <property type="entry name" value="Maf"/>
    <property type="match status" value="1"/>
</dbReference>
<dbReference type="InterPro" id="IPR029001">
    <property type="entry name" value="ITPase-like_fam"/>
</dbReference>
<dbReference type="InterPro" id="IPR003697">
    <property type="entry name" value="Maf-like"/>
</dbReference>
<dbReference type="NCBIfam" id="TIGR00172">
    <property type="entry name" value="maf"/>
    <property type="match status" value="1"/>
</dbReference>
<dbReference type="PANTHER" id="PTHR43213">
    <property type="entry name" value="BIFUNCTIONAL DTTP/UTP PYROPHOSPHATASE/METHYLTRANSFERASE PROTEIN-RELATED"/>
    <property type="match status" value="1"/>
</dbReference>
<dbReference type="PANTHER" id="PTHR43213:SF5">
    <property type="entry name" value="BIFUNCTIONAL DTTP_UTP PYROPHOSPHATASE_METHYLTRANSFERASE PROTEIN-RELATED"/>
    <property type="match status" value="1"/>
</dbReference>
<dbReference type="Pfam" id="PF02545">
    <property type="entry name" value="Maf"/>
    <property type="match status" value="1"/>
</dbReference>
<dbReference type="PIRSF" id="PIRSF006305">
    <property type="entry name" value="Maf"/>
    <property type="match status" value="1"/>
</dbReference>
<dbReference type="SUPFAM" id="SSF52972">
    <property type="entry name" value="ITPase-like"/>
    <property type="match status" value="1"/>
</dbReference>
<name>NTPPA_DEHMB</name>
<evidence type="ECO:0000255" key="1">
    <source>
        <dbReference type="HAMAP-Rule" id="MF_00528"/>
    </source>
</evidence>
<reference key="1">
    <citation type="submission" date="2007-05" db="EMBL/GenBank/DDBJ databases">
        <title>Complete sequence of Dehalococcoides sp. BAV1.</title>
        <authorList>
            <consortium name="US DOE Joint Genome Institute"/>
            <person name="Copeland A."/>
            <person name="Lucas S."/>
            <person name="Lapidus A."/>
            <person name="Barry K."/>
            <person name="Detter J.C."/>
            <person name="Glavina del Rio T."/>
            <person name="Hammon N."/>
            <person name="Israni S."/>
            <person name="Pitluck S."/>
            <person name="Lowry S."/>
            <person name="Clum A."/>
            <person name="Schmutz J."/>
            <person name="Larimer F."/>
            <person name="Land M."/>
            <person name="Hauser L."/>
            <person name="Kyrpides N."/>
            <person name="Kim E."/>
            <person name="Ritalahti K.M."/>
            <person name="Loeffler F."/>
            <person name="Richardson P."/>
        </authorList>
    </citation>
    <scope>NUCLEOTIDE SEQUENCE [LARGE SCALE GENOMIC DNA]</scope>
    <source>
        <strain>ATCC BAA-2100 / JCM 16839 / KCTC 5957 / BAV1</strain>
    </source>
</reference>